<keyword id="KW-0325">Glycoprotein</keyword>
<keyword id="KW-0333">Golgi apparatus</keyword>
<keyword id="KW-0472">Membrane</keyword>
<keyword id="KW-0653">Protein transport</keyword>
<keyword id="KW-0675">Receptor</keyword>
<keyword id="KW-1185">Reference proteome</keyword>
<keyword id="KW-0677">Repeat</keyword>
<keyword id="KW-0732">Signal</keyword>
<keyword id="KW-0812">Transmembrane</keyword>
<keyword id="KW-1133">Transmembrane helix</keyword>
<keyword id="KW-0813">Transport</keyword>
<feature type="signal peptide" evidence="2">
    <location>
        <begin position="1"/>
        <end position="24"/>
    </location>
</feature>
<feature type="chain" id="PRO_0000407517" description="Vacuolar protein sorting/targeting protein 10">
    <location>
        <begin position="25"/>
        <end position="1570"/>
    </location>
</feature>
<feature type="topological domain" description="Lumenal" evidence="2">
    <location>
        <begin position="25"/>
        <end position="1390"/>
    </location>
</feature>
<feature type="transmembrane region" description="Helical" evidence="2">
    <location>
        <begin position="1391"/>
        <end position="1411"/>
    </location>
</feature>
<feature type="topological domain" description="Cytoplasmic" evidence="2">
    <location>
        <begin position="1412"/>
        <end position="1570"/>
    </location>
</feature>
<feature type="repeat" description="BNR 1">
    <location>
        <begin position="63"/>
        <end position="72"/>
    </location>
</feature>
<feature type="repeat" description="BNR 2">
    <location>
        <begin position="105"/>
        <end position="116"/>
    </location>
</feature>
<feature type="repeat" description="BNR 3">
    <location>
        <begin position="463"/>
        <end position="473"/>
    </location>
</feature>
<feature type="repeat" description="BNR 4">
    <location>
        <begin position="508"/>
        <end position="518"/>
    </location>
</feature>
<feature type="repeat" description="BNR 5">
    <location>
        <begin position="801"/>
        <end position="812"/>
    </location>
</feature>
<feature type="repeat" description="BNR 6">
    <location>
        <begin position="858"/>
        <end position="869"/>
    </location>
</feature>
<feature type="repeat" description="BNR 7">
    <location>
        <begin position="1138"/>
        <end position="1148"/>
    </location>
</feature>
<feature type="repeat" description="BNR 8">
    <location>
        <begin position="1179"/>
        <end position="1189"/>
    </location>
</feature>
<feature type="region of interest" description="Disordered" evidence="3">
    <location>
        <begin position="1517"/>
        <end position="1570"/>
    </location>
</feature>
<feature type="compositionally biased region" description="Acidic residues" evidence="3">
    <location>
        <begin position="1529"/>
        <end position="1546"/>
    </location>
</feature>
<feature type="compositionally biased region" description="Acidic residues" evidence="3">
    <location>
        <begin position="1556"/>
        <end position="1570"/>
    </location>
</feature>
<feature type="glycosylation site" description="N-linked (GlcNAc...) asparagine" evidence="2">
    <location>
        <position position="503"/>
    </location>
</feature>
<feature type="glycosylation site" description="N-linked (GlcNAc...) asparagine" evidence="2">
    <location>
        <position position="1009"/>
    </location>
</feature>
<feature type="glycosylation site" description="N-linked (GlcNAc...) asparagine" evidence="2">
    <location>
        <position position="1299"/>
    </location>
</feature>
<protein>
    <recommendedName>
        <fullName>Vacuolar protein sorting/targeting protein 10</fullName>
    </recommendedName>
    <alternativeName>
        <fullName>Carboxypeptidase Y receptor</fullName>
        <shortName>CPY receptor</shortName>
    </alternativeName>
    <alternativeName>
        <fullName>Sortilin VPS10</fullName>
    </alternativeName>
    <alternativeName>
        <fullName>Vacuolar carboxypeptidase sorting receptor VPS10</fullName>
    </alternativeName>
</protein>
<accession>B5RU30</accession>
<reference key="1">
    <citation type="journal article" date="2004" name="Nature">
        <title>Genome evolution in yeasts.</title>
        <authorList>
            <person name="Dujon B."/>
            <person name="Sherman D."/>
            <person name="Fischer G."/>
            <person name="Durrens P."/>
            <person name="Casaregola S."/>
            <person name="Lafontaine I."/>
            <person name="de Montigny J."/>
            <person name="Marck C."/>
            <person name="Neuveglise C."/>
            <person name="Talla E."/>
            <person name="Goffard N."/>
            <person name="Frangeul L."/>
            <person name="Aigle M."/>
            <person name="Anthouard V."/>
            <person name="Babour A."/>
            <person name="Barbe V."/>
            <person name="Barnay S."/>
            <person name="Blanchin S."/>
            <person name="Beckerich J.-M."/>
            <person name="Beyne E."/>
            <person name="Bleykasten C."/>
            <person name="Boisrame A."/>
            <person name="Boyer J."/>
            <person name="Cattolico L."/>
            <person name="Confanioleri F."/>
            <person name="de Daruvar A."/>
            <person name="Despons L."/>
            <person name="Fabre E."/>
            <person name="Fairhead C."/>
            <person name="Ferry-Dumazet H."/>
            <person name="Groppi A."/>
            <person name="Hantraye F."/>
            <person name="Hennequin C."/>
            <person name="Jauniaux N."/>
            <person name="Joyet P."/>
            <person name="Kachouri R."/>
            <person name="Kerrest A."/>
            <person name="Koszul R."/>
            <person name="Lemaire M."/>
            <person name="Lesur I."/>
            <person name="Ma L."/>
            <person name="Muller H."/>
            <person name="Nicaud J.-M."/>
            <person name="Nikolski M."/>
            <person name="Oztas S."/>
            <person name="Ozier-Kalogeropoulos O."/>
            <person name="Pellenz S."/>
            <person name="Potier S."/>
            <person name="Richard G.-F."/>
            <person name="Straub M.-L."/>
            <person name="Suleau A."/>
            <person name="Swennen D."/>
            <person name="Tekaia F."/>
            <person name="Wesolowski-Louvel M."/>
            <person name="Westhof E."/>
            <person name="Wirth B."/>
            <person name="Zeniou-Meyer M."/>
            <person name="Zivanovic Y."/>
            <person name="Bolotin-Fukuhara M."/>
            <person name="Thierry A."/>
            <person name="Bouchier C."/>
            <person name="Caudron B."/>
            <person name="Scarpelli C."/>
            <person name="Gaillardin C."/>
            <person name="Weissenbach J."/>
            <person name="Wincker P."/>
            <person name="Souciet J.-L."/>
        </authorList>
    </citation>
    <scope>NUCLEOTIDE SEQUENCE [LARGE SCALE GENOMIC DNA]</scope>
    <source>
        <strain>ATCC 36239 / CBS 767 / BCRC 21394 / JCM 1990 / NBRC 0083 / IGC 2968</strain>
    </source>
</reference>
<evidence type="ECO:0000250" key="1"/>
<evidence type="ECO:0000255" key="2"/>
<evidence type="ECO:0000256" key="3">
    <source>
        <dbReference type="SAM" id="MobiDB-lite"/>
    </source>
</evidence>
<evidence type="ECO:0000305" key="4"/>
<proteinExistence type="inferred from homology"/>
<comment type="function">
    <text evidence="1">Functions as a sorting receptor in the Golgi compartment required for the intracellular sorting and delivery of soluble vacuolar proteins, like carboxypeptidase Y (CPY) and proteinase A. Executes multiple rounds of sorting by cycling between the late Golgi and a prevacuolar endosome-like compartment (By similarity).</text>
</comment>
<comment type="subcellular location">
    <subcellularLocation>
        <location evidence="1">Golgi apparatus</location>
        <location evidence="1">trans-Golgi network membrane</location>
        <topology evidence="1">Single-pass type I membrane protein</topology>
    </subcellularLocation>
    <subcellularLocation>
        <location evidence="1">Prevacuolar compartment membrane</location>
        <topology evidence="1">Single-pass type I membrane protein</topology>
    </subcellularLocation>
    <text evidence="1">Cycles between the Golgi apparatus and the prevacuolar compartment.</text>
</comment>
<comment type="similarity">
    <text evidence="4">Belongs to the VPS10-related sortilin family.</text>
</comment>
<dbReference type="EMBL" id="CR382137">
    <property type="protein sequence ID" value="CAR65842.1"/>
    <property type="molecule type" value="Genomic_DNA"/>
</dbReference>
<dbReference type="RefSeq" id="XP_002770499.1">
    <property type="nucleotide sequence ID" value="XM_002770453.1"/>
</dbReference>
<dbReference type="SMR" id="B5RU30"/>
<dbReference type="FunCoup" id="B5RU30">
    <property type="interactions" value="222"/>
</dbReference>
<dbReference type="STRING" id="284592.B5RU30"/>
<dbReference type="GlyCosmos" id="B5RU30">
    <property type="glycosylation" value="3 sites, No reported glycans"/>
</dbReference>
<dbReference type="GeneID" id="8998776"/>
<dbReference type="KEGG" id="dha:DEHA2E16918g"/>
<dbReference type="VEuPathDB" id="FungiDB:DEHA2E16918g"/>
<dbReference type="eggNOG" id="KOG3511">
    <property type="taxonomic scope" value="Eukaryota"/>
</dbReference>
<dbReference type="HOGENOM" id="CLU_000700_0_1_1"/>
<dbReference type="InParanoid" id="B5RU30"/>
<dbReference type="OMA" id="ECDYNYY"/>
<dbReference type="OrthoDB" id="443634at2759"/>
<dbReference type="Proteomes" id="UP000000599">
    <property type="component" value="Chromosome E"/>
</dbReference>
<dbReference type="GO" id="GO:0005829">
    <property type="term" value="C:cytosol"/>
    <property type="evidence" value="ECO:0007669"/>
    <property type="project" value="GOC"/>
</dbReference>
<dbReference type="GO" id="GO:0005794">
    <property type="term" value="C:Golgi apparatus"/>
    <property type="evidence" value="ECO:0007669"/>
    <property type="project" value="UniProtKB-SubCell"/>
</dbReference>
<dbReference type="GO" id="GO:0016020">
    <property type="term" value="C:membrane"/>
    <property type="evidence" value="ECO:0007669"/>
    <property type="project" value="UniProtKB-KW"/>
</dbReference>
<dbReference type="GO" id="GO:0006895">
    <property type="term" value="P:Golgi to endosome transport"/>
    <property type="evidence" value="ECO:0007669"/>
    <property type="project" value="TreeGrafter"/>
</dbReference>
<dbReference type="GO" id="GO:0006896">
    <property type="term" value="P:Golgi to vacuole transport"/>
    <property type="evidence" value="ECO:0007669"/>
    <property type="project" value="TreeGrafter"/>
</dbReference>
<dbReference type="GO" id="GO:0006623">
    <property type="term" value="P:protein targeting to vacuole"/>
    <property type="evidence" value="ECO:0007669"/>
    <property type="project" value="TreeGrafter"/>
</dbReference>
<dbReference type="FunFam" id="3.30.60.270:FF:000005">
    <property type="entry name" value="Sortilin"/>
    <property type="match status" value="1"/>
</dbReference>
<dbReference type="Gene3D" id="2.10.70.80">
    <property type="match status" value="2"/>
</dbReference>
<dbReference type="Gene3D" id="3.30.60.270">
    <property type="match status" value="1"/>
</dbReference>
<dbReference type="Gene3D" id="2.130.10.10">
    <property type="entry name" value="YVTN repeat-like/Quinoprotein amine dehydrogenase"/>
    <property type="match status" value="1"/>
</dbReference>
<dbReference type="InterPro" id="IPR031777">
    <property type="entry name" value="Sortilin_C"/>
</dbReference>
<dbReference type="InterPro" id="IPR031778">
    <property type="entry name" value="Sortilin_N"/>
</dbReference>
<dbReference type="InterPro" id="IPR006581">
    <property type="entry name" value="VPS10"/>
</dbReference>
<dbReference type="InterPro" id="IPR050310">
    <property type="entry name" value="VPS10-sortilin"/>
</dbReference>
<dbReference type="InterPro" id="IPR015943">
    <property type="entry name" value="WD40/YVTN_repeat-like_dom_sf"/>
</dbReference>
<dbReference type="PANTHER" id="PTHR12106">
    <property type="entry name" value="SORTILIN RELATED"/>
    <property type="match status" value="1"/>
</dbReference>
<dbReference type="PANTHER" id="PTHR12106:SF27">
    <property type="entry name" value="SORTILIN-RELATED RECEPTOR"/>
    <property type="match status" value="1"/>
</dbReference>
<dbReference type="Pfam" id="PF15902">
    <property type="entry name" value="Sortilin-Vps10"/>
    <property type="match status" value="2"/>
</dbReference>
<dbReference type="Pfam" id="PF15901">
    <property type="entry name" value="Sortilin_C"/>
    <property type="match status" value="2"/>
</dbReference>
<dbReference type="SMART" id="SM00602">
    <property type="entry name" value="VPS10"/>
    <property type="match status" value="2"/>
</dbReference>
<dbReference type="SUPFAM" id="SSF110296">
    <property type="entry name" value="Oligoxyloglucan reducing end-specific cellobiohydrolase"/>
    <property type="match status" value="3"/>
</dbReference>
<organism>
    <name type="scientific">Debaryomyces hansenii (strain ATCC 36239 / CBS 767 / BCRC 21394 / JCM 1990 / NBRC 0083 / IGC 2968)</name>
    <name type="common">Yeast</name>
    <name type="synonym">Torulaspora hansenii</name>
    <dbReference type="NCBI Taxonomy" id="284592"/>
    <lineage>
        <taxon>Eukaryota</taxon>
        <taxon>Fungi</taxon>
        <taxon>Dikarya</taxon>
        <taxon>Ascomycota</taxon>
        <taxon>Saccharomycotina</taxon>
        <taxon>Pichiomycetes</taxon>
        <taxon>Debaryomycetaceae</taxon>
        <taxon>Debaryomyces</taxon>
    </lineage>
</organism>
<name>VPS10_DEBHA</name>
<sequence length="1570" mass="177947">MRIELRSWSSIAFLFTLFIAYVVSESNFKPDIKLTKEGEIAKEYNYFDDSSNILVLRKDKLAISFDDGVSWKNVKETENERVIRYQFDPFNNNRAFAFTIDKFQYVTNDKGETWSKFEIYDPKNEKEHLTLNSIPHILFNAKNPDLAIFVVYHCPEDKKISNQCVNYHFLTTDGFKSNPKSLQTDASICTFAKSTKSYDVGKDETIYCSRNKLNSFGHIVESYIVASDDFFKTESKINHALAKSGSIIDIRVLQNFAIVVVQNDKFNTKSKVSLLVSKDGKNFNEADLKVDISYGIMTFLESSSSSIFLAVMDYSNSFRKFSLSTVYSSDSSGLSFSKVLDKVQGGSIQKVETIDGVWLANIADEIKDNKGKSKTLLDMLMGGGIDKNIKSRISYNDGEDWNLLKINNDGSCTTESECSLHLLNPTEKSGDGKFVTGPTPGILLSVGNKGSKLEKDINRMNTWISRDGGISWDFALDEPCLFSFGDQGNIIVAIPYYGKNKMNSSNMYFSLDQGKSWENVALEIPIFPLTLTTTVDGTSQRFILSGLIDSTPKDKADYSFAETLYAIDFSKAFGGKKCDSKKDFEDIYTRLDPSNDKPICIYGHKEKFRRRKQNSQCFVNELFEDVKVYDDPCECTVIDFECASGFSRSKEKECKPDKKKLANICRDKKSKKISLPDKALASGNKCKNPKEAAKEFVKTKEFKCSDYLDEDDKDKNKGNKHDIVSTFNEFDSELQQYTYVEQGETYSGENIILRTKANVAYASNNGGVEFVKIPVSDEIVTYYPGLVPGQVILITDSEKFYFSIDGGNTFQKKTAPAKPNVIGARIISFDKKDTEKFIWYSSENCDNPFSRDCSLVAYITEDGGENFQKLKEDVRSCDFVADVFEDVSDEIKNMIYCTVEDKSSRKLMLLSSTDYFKQSKKVFDNVVGYAITGNFLVAATIDDAEQSLKAKVTVDGQIFADADFPPDFHVDSQQAYTVLDSASKAIFIHVTTNNENGHEFGSILKSNSNGTSYSLTLDKVNRNRIGYVDYDRIEGIEGVIVSNIVANDHSKDRKKLKTQITHNDGGEWSYITPPVIDSKGKKYKCNGKSLSKCSLNLHGFTERADYRDTFSSASAIGLMMAVGNVGEYLEDFDKCSTFISRDGGITWKEIKKGVYMWEYGDRGTILVLVNAEKTTDKLMYSLDEGDTWHDYKFAEEPIDVLDLATVPSDTSRKFLIFGKSDRKMVSYSIDFTNIHKRQCQLDLDNPNDDDFEYWSPTHPSTPDNCLFGREAKYLRRAIGHDDCFIGSAPLIEGFKVTRNCSCTRKDYECDYNFFRDSDDTCKLVKGLSPSNRKKEMCKKENAFEYFEPTGYRKIPLSTCVGGKNFDTWKVHPCPGKQKEFNKHHGKELNSGSLLAVIGIPIAVFLLATWFVYERGIRRNGGFKRFGQIRLDLDDDDFHPIENNEVDKAINKIVKGGIVIVAASIAGFKTLRKVDRMLFDKVTSSLFRRRPGHRNYVHVPEMDEEEELFGNFRDNYEEELEEGTNNINEDFNDEPNDYEYEEETNDEVDSRLFNIDDQSDEELQSATPEDN</sequence>
<gene>
    <name type="primary">VPS10</name>
    <name type="ordered locus">DEHA2E16918g</name>
</gene>